<protein>
    <recommendedName>
        <fullName evidence="2">Putative hydrolase Bmul_3283/BMULJ_05242</fullName>
        <ecNumber>3.-.-.-</ecNumber>
    </recommendedName>
</protein>
<accession>A9ALD1</accession>
<name>UGL_BURM1</name>
<evidence type="ECO:0000250" key="1">
    <source>
        <dbReference type="UniProtKB" id="Q6P587"/>
    </source>
</evidence>
<evidence type="ECO:0000305" key="2"/>
<reference key="1">
    <citation type="submission" date="2007-10" db="EMBL/GenBank/DDBJ databases">
        <title>Complete sequence of chromosome 2 of Burkholderia multivorans ATCC 17616.</title>
        <authorList>
            <person name="Copeland A."/>
            <person name="Lucas S."/>
            <person name="Lapidus A."/>
            <person name="Barry K."/>
            <person name="Glavina del Rio T."/>
            <person name="Dalin E."/>
            <person name="Tice H."/>
            <person name="Pitluck S."/>
            <person name="Chain P."/>
            <person name="Malfatti S."/>
            <person name="Shin M."/>
            <person name="Vergez L."/>
            <person name="Schmutz J."/>
            <person name="Larimer F."/>
            <person name="Land M."/>
            <person name="Hauser L."/>
            <person name="Kyrpides N."/>
            <person name="Kim E."/>
            <person name="Tiedje J."/>
            <person name="Richardson P."/>
        </authorList>
    </citation>
    <scope>NUCLEOTIDE SEQUENCE [LARGE SCALE GENOMIC DNA]</scope>
    <source>
        <strain>ATCC 17616 / 249</strain>
    </source>
</reference>
<reference key="2">
    <citation type="submission" date="2007-04" db="EMBL/GenBank/DDBJ databases">
        <title>Complete genome sequence of Burkholderia multivorans ATCC 17616.</title>
        <authorList>
            <person name="Ohtsubo Y."/>
            <person name="Yamashita A."/>
            <person name="Kurokawa K."/>
            <person name="Takami H."/>
            <person name="Yuhara S."/>
            <person name="Nishiyama E."/>
            <person name="Endo R."/>
            <person name="Miyazaki R."/>
            <person name="Ono A."/>
            <person name="Yano K."/>
            <person name="Ito M."/>
            <person name="Sota M."/>
            <person name="Yuji N."/>
            <person name="Hattori M."/>
            <person name="Tsuda M."/>
        </authorList>
    </citation>
    <scope>NUCLEOTIDE SEQUENCE [LARGE SCALE GENOMIC DNA]</scope>
    <source>
        <strain>ATCC 17616 / 249</strain>
    </source>
</reference>
<keyword id="KW-0378">Hydrolase</keyword>
<keyword id="KW-0460">Magnesium</keyword>
<keyword id="KW-0479">Metal-binding</keyword>
<keyword id="KW-1185">Reference proteome</keyword>
<sequence length="282" mass="30170">MKLLRYGPPGQEKPGILDADGRIRDLSAHVPDLAGDVLSDAGLARLRALDPATLPLVSGEPRIGACVGRVGKFIGIGLNYADHAAEAGMPVPKEPVVFGKWTSSICGPNDGIDIPKGSVKTDWEVELGVVIGAPCKDVDEARALDYVAGYCVVNDVSEREWQIERGGQWDKGKGFDTFGPIGPWLVTRDEVPDPQSLDLWLEVDGHRYQNGNTRTMVFTVAQLIAYLSSCMTLQPGDVITTGTPPGVGMGIKPAPVYLKAGQMVRLGIEGLGEQLQLTRAAR</sequence>
<dbReference type="EC" id="3.-.-.-"/>
<dbReference type="EMBL" id="CP000869">
    <property type="protein sequence ID" value="ABX16967.1"/>
    <property type="molecule type" value="Genomic_DNA"/>
</dbReference>
<dbReference type="EMBL" id="AP009386">
    <property type="protein sequence ID" value="BAG47080.1"/>
    <property type="molecule type" value="Genomic_DNA"/>
</dbReference>
<dbReference type="RefSeq" id="WP_012216272.1">
    <property type="nucleotide sequence ID" value="NC_010086.1"/>
</dbReference>
<dbReference type="SMR" id="A9ALD1"/>
<dbReference type="STRING" id="395019.BMULJ_05242"/>
<dbReference type="KEGG" id="bmj:BMULJ_05242"/>
<dbReference type="KEGG" id="bmu:Bmul_3283"/>
<dbReference type="eggNOG" id="COG0179">
    <property type="taxonomic scope" value="Bacteria"/>
</dbReference>
<dbReference type="HOGENOM" id="CLU_028458_3_4_4"/>
<dbReference type="Proteomes" id="UP000008815">
    <property type="component" value="Chromosome 2"/>
</dbReference>
<dbReference type="GO" id="GO:0016787">
    <property type="term" value="F:hydrolase activity"/>
    <property type="evidence" value="ECO:0007669"/>
    <property type="project" value="UniProtKB-KW"/>
</dbReference>
<dbReference type="GO" id="GO:0046872">
    <property type="term" value="F:metal ion binding"/>
    <property type="evidence" value="ECO:0007669"/>
    <property type="project" value="UniProtKB-KW"/>
</dbReference>
<dbReference type="GO" id="GO:0050385">
    <property type="term" value="F:ureidoglycolate lyase activity"/>
    <property type="evidence" value="ECO:0007669"/>
    <property type="project" value="UniProtKB-EC"/>
</dbReference>
<dbReference type="GO" id="GO:0019628">
    <property type="term" value="P:urate catabolic process"/>
    <property type="evidence" value="ECO:0007669"/>
    <property type="project" value="UniProtKB-UniPathway"/>
</dbReference>
<dbReference type="FunFam" id="3.90.850.10:FF:000002">
    <property type="entry name" value="2-hydroxyhepta-2,4-diene-1,7-dioate isomerase"/>
    <property type="match status" value="1"/>
</dbReference>
<dbReference type="Gene3D" id="3.90.850.10">
    <property type="entry name" value="Fumarylacetoacetase-like, C-terminal domain"/>
    <property type="match status" value="1"/>
</dbReference>
<dbReference type="InterPro" id="IPR051121">
    <property type="entry name" value="FAH"/>
</dbReference>
<dbReference type="InterPro" id="IPR011234">
    <property type="entry name" value="Fumarylacetoacetase-like_C"/>
</dbReference>
<dbReference type="InterPro" id="IPR036663">
    <property type="entry name" value="Fumarylacetoacetase_C_sf"/>
</dbReference>
<dbReference type="PANTHER" id="PTHR42796:SF4">
    <property type="entry name" value="FUMARYLACETOACETATE HYDROLASE DOMAIN-CONTAINING PROTEIN 2A"/>
    <property type="match status" value="1"/>
</dbReference>
<dbReference type="PANTHER" id="PTHR42796">
    <property type="entry name" value="FUMARYLACETOACETATE HYDROLASE DOMAIN-CONTAINING PROTEIN 2A-RELATED"/>
    <property type="match status" value="1"/>
</dbReference>
<dbReference type="Pfam" id="PF01557">
    <property type="entry name" value="FAA_hydrolase"/>
    <property type="match status" value="1"/>
</dbReference>
<dbReference type="SUPFAM" id="SSF56529">
    <property type="entry name" value="FAH"/>
    <property type="match status" value="1"/>
</dbReference>
<organism>
    <name type="scientific">Burkholderia multivorans (strain ATCC 17616 / 249)</name>
    <dbReference type="NCBI Taxonomy" id="395019"/>
    <lineage>
        <taxon>Bacteria</taxon>
        <taxon>Pseudomonadati</taxon>
        <taxon>Pseudomonadota</taxon>
        <taxon>Betaproteobacteria</taxon>
        <taxon>Burkholderiales</taxon>
        <taxon>Burkholderiaceae</taxon>
        <taxon>Burkholderia</taxon>
        <taxon>Burkholderia cepacia complex</taxon>
    </lineage>
</organism>
<comment type="cofactor">
    <cofactor evidence="1">
        <name>Mg(2+)</name>
        <dbReference type="ChEBI" id="CHEBI:18420"/>
    </cofactor>
</comment>
<comment type="similarity">
    <text evidence="2">Belongs to the FAH family.</text>
</comment>
<gene>
    <name type="ordered locus">Bmul_3283</name>
    <name type="ordered locus">BMULJ_05242</name>
</gene>
<feature type="chain" id="PRO_0000371515" description="Putative hydrolase Bmul_3283/BMULJ_05242">
    <location>
        <begin position="1"/>
        <end position="282"/>
    </location>
</feature>
<feature type="binding site" evidence="1">
    <location>
        <position position="124"/>
    </location>
    <ligand>
        <name>Mg(2+)</name>
        <dbReference type="ChEBI" id="CHEBI:18420"/>
    </ligand>
</feature>
<feature type="binding site" evidence="1">
    <location>
        <position position="126"/>
    </location>
    <ligand>
        <name>Mg(2+)</name>
        <dbReference type="ChEBI" id="CHEBI:18420"/>
    </ligand>
</feature>
<feature type="binding site" evidence="1">
    <location>
        <position position="155"/>
    </location>
    <ligand>
        <name>Mg(2+)</name>
        <dbReference type="ChEBI" id="CHEBI:18420"/>
    </ligand>
</feature>
<proteinExistence type="inferred from homology"/>